<accession>A5VPJ6</accession>
<gene>
    <name evidence="1" type="primary">acpS</name>
    <name type="ordered locus">BOV_0652</name>
</gene>
<reference key="1">
    <citation type="journal article" date="2009" name="PLoS ONE">
        <title>Genome degradation in Brucella ovis corresponds with narrowing of its host range and tissue tropism.</title>
        <authorList>
            <person name="Tsolis R.M."/>
            <person name="Seshadri R."/>
            <person name="Santos R.L."/>
            <person name="Sangari F.J."/>
            <person name="Lobo J.M."/>
            <person name="de Jong M.F."/>
            <person name="Ren Q."/>
            <person name="Myers G."/>
            <person name="Brinkac L.M."/>
            <person name="Nelson W.C."/>
            <person name="Deboy R.T."/>
            <person name="Angiuoli S."/>
            <person name="Khouri H."/>
            <person name="Dimitrov G."/>
            <person name="Robinson J.R."/>
            <person name="Mulligan S."/>
            <person name="Walker R.L."/>
            <person name="Elzer P.E."/>
            <person name="Hassan K.A."/>
            <person name="Paulsen I.T."/>
        </authorList>
    </citation>
    <scope>NUCLEOTIDE SEQUENCE [LARGE SCALE GENOMIC DNA]</scope>
    <source>
        <strain>ATCC 25840 / 63/290 / NCTC 10512</strain>
    </source>
</reference>
<protein>
    <recommendedName>
        <fullName evidence="1">Holo-[acyl-carrier-protein] synthase</fullName>
        <shortName evidence="1">Holo-ACP synthase</shortName>
        <ecNumber evidence="1">2.7.8.7</ecNumber>
    </recommendedName>
    <alternativeName>
        <fullName evidence="1">4'-phosphopantetheinyl transferase AcpS</fullName>
    </alternativeName>
</protein>
<keyword id="KW-0963">Cytoplasm</keyword>
<keyword id="KW-0275">Fatty acid biosynthesis</keyword>
<keyword id="KW-0276">Fatty acid metabolism</keyword>
<keyword id="KW-0444">Lipid biosynthesis</keyword>
<keyword id="KW-0443">Lipid metabolism</keyword>
<keyword id="KW-0460">Magnesium</keyword>
<keyword id="KW-0479">Metal-binding</keyword>
<keyword id="KW-0808">Transferase</keyword>
<organism>
    <name type="scientific">Brucella ovis (strain ATCC 25840 / 63/290 / NCTC 10512)</name>
    <dbReference type="NCBI Taxonomy" id="444178"/>
    <lineage>
        <taxon>Bacteria</taxon>
        <taxon>Pseudomonadati</taxon>
        <taxon>Pseudomonadota</taxon>
        <taxon>Alphaproteobacteria</taxon>
        <taxon>Hyphomicrobiales</taxon>
        <taxon>Brucellaceae</taxon>
        <taxon>Brucella/Ochrobactrum group</taxon>
        <taxon>Brucella</taxon>
    </lineage>
</organism>
<dbReference type="EC" id="2.7.8.7" evidence="1"/>
<dbReference type="EMBL" id="CP000708">
    <property type="protein sequence ID" value="ABQ61594.1"/>
    <property type="molecule type" value="Genomic_DNA"/>
</dbReference>
<dbReference type="RefSeq" id="WP_002963803.1">
    <property type="nucleotide sequence ID" value="NC_009505.1"/>
</dbReference>
<dbReference type="SMR" id="A5VPJ6"/>
<dbReference type="GeneID" id="97534013"/>
<dbReference type="KEGG" id="bov:BOV_0652"/>
<dbReference type="HOGENOM" id="CLU_089696_0_2_5"/>
<dbReference type="PhylomeDB" id="A5VPJ6"/>
<dbReference type="Proteomes" id="UP000006383">
    <property type="component" value="Chromosome I"/>
</dbReference>
<dbReference type="GO" id="GO:0005737">
    <property type="term" value="C:cytoplasm"/>
    <property type="evidence" value="ECO:0007669"/>
    <property type="project" value="UniProtKB-SubCell"/>
</dbReference>
<dbReference type="GO" id="GO:0008897">
    <property type="term" value="F:holo-[acyl-carrier-protein] synthase activity"/>
    <property type="evidence" value="ECO:0007669"/>
    <property type="project" value="UniProtKB-UniRule"/>
</dbReference>
<dbReference type="GO" id="GO:0000287">
    <property type="term" value="F:magnesium ion binding"/>
    <property type="evidence" value="ECO:0007669"/>
    <property type="project" value="UniProtKB-UniRule"/>
</dbReference>
<dbReference type="GO" id="GO:0006633">
    <property type="term" value="P:fatty acid biosynthetic process"/>
    <property type="evidence" value="ECO:0007669"/>
    <property type="project" value="UniProtKB-UniRule"/>
</dbReference>
<dbReference type="Gene3D" id="3.90.470.20">
    <property type="entry name" value="4'-phosphopantetheinyl transferase domain"/>
    <property type="match status" value="1"/>
</dbReference>
<dbReference type="HAMAP" id="MF_00101">
    <property type="entry name" value="AcpS"/>
    <property type="match status" value="1"/>
</dbReference>
<dbReference type="InterPro" id="IPR008278">
    <property type="entry name" value="4-PPantetheinyl_Trfase_dom"/>
</dbReference>
<dbReference type="InterPro" id="IPR037143">
    <property type="entry name" value="4-PPantetheinyl_Trfase_dom_sf"/>
</dbReference>
<dbReference type="InterPro" id="IPR002582">
    <property type="entry name" value="ACPS"/>
</dbReference>
<dbReference type="InterPro" id="IPR004568">
    <property type="entry name" value="Ppantetheine-prot_Trfase_dom"/>
</dbReference>
<dbReference type="NCBIfam" id="TIGR00516">
    <property type="entry name" value="acpS"/>
    <property type="match status" value="1"/>
</dbReference>
<dbReference type="NCBIfam" id="TIGR00556">
    <property type="entry name" value="pantethn_trn"/>
    <property type="match status" value="1"/>
</dbReference>
<dbReference type="Pfam" id="PF01648">
    <property type="entry name" value="ACPS"/>
    <property type="match status" value="1"/>
</dbReference>
<dbReference type="SUPFAM" id="SSF56214">
    <property type="entry name" value="4'-phosphopantetheinyl transferase"/>
    <property type="match status" value="1"/>
</dbReference>
<name>ACPS_BRUO2</name>
<proteinExistence type="inferred from homology"/>
<evidence type="ECO:0000255" key="1">
    <source>
        <dbReference type="HAMAP-Rule" id="MF_00101"/>
    </source>
</evidence>
<comment type="function">
    <text evidence="1">Transfers the 4'-phosphopantetheine moiety from coenzyme A to a Ser of acyl-carrier-protein.</text>
</comment>
<comment type="catalytic activity">
    <reaction evidence="1">
        <text>apo-[ACP] + CoA = holo-[ACP] + adenosine 3',5'-bisphosphate + H(+)</text>
        <dbReference type="Rhea" id="RHEA:12068"/>
        <dbReference type="Rhea" id="RHEA-COMP:9685"/>
        <dbReference type="Rhea" id="RHEA-COMP:9690"/>
        <dbReference type="ChEBI" id="CHEBI:15378"/>
        <dbReference type="ChEBI" id="CHEBI:29999"/>
        <dbReference type="ChEBI" id="CHEBI:57287"/>
        <dbReference type="ChEBI" id="CHEBI:58343"/>
        <dbReference type="ChEBI" id="CHEBI:64479"/>
        <dbReference type="EC" id="2.7.8.7"/>
    </reaction>
</comment>
<comment type="cofactor">
    <cofactor evidence="1">
        <name>Mg(2+)</name>
        <dbReference type="ChEBI" id="CHEBI:18420"/>
    </cofactor>
</comment>
<comment type="subcellular location">
    <subcellularLocation>
        <location evidence="1">Cytoplasm</location>
    </subcellularLocation>
</comment>
<comment type="similarity">
    <text evidence="1">Belongs to the P-Pant transferase superfamily. AcpS family.</text>
</comment>
<feature type="chain" id="PRO_1000008392" description="Holo-[acyl-carrier-protein] synthase">
    <location>
        <begin position="1"/>
        <end position="134"/>
    </location>
</feature>
<feature type="binding site" evidence="1">
    <location>
        <position position="8"/>
    </location>
    <ligand>
        <name>Mg(2+)</name>
        <dbReference type="ChEBI" id="CHEBI:18420"/>
    </ligand>
</feature>
<feature type="binding site" evidence="1">
    <location>
        <position position="57"/>
    </location>
    <ligand>
        <name>Mg(2+)</name>
        <dbReference type="ChEBI" id="CHEBI:18420"/>
    </ligand>
</feature>
<sequence>MIVGIGSDLIDIRRVEKTLERHGSRFRDRVFTEIEQRKSEGRKQRAASYAKRFAAKEACAKALGTGIAEGVFWRDMGVVNTPSGKPTMHLTGGAAKQLQKLLPAGTNAAIHLTITDDFPLAQAFVIIEALPVLE</sequence>